<feature type="chain" id="PRO_0000151826" description="3,4-dihydroxy-2-butanone 4-phosphate synthase">
    <location>
        <begin position="1"/>
        <end position="247"/>
    </location>
</feature>
<feature type="binding site" evidence="1">
    <location>
        <begin position="38"/>
        <end position="39"/>
    </location>
    <ligand>
        <name>D-ribulose 5-phosphate</name>
        <dbReference type="ChEBI" id="CHEBI:58121"/>
    </ligand>
</feature>
<feature type="binding site" evidence="1">
    <location>
        <position position="39"/>
    </location>
    <ligand>
        <name>Mg(2+)</name>
        <dbReference type="ChEBI" id="CHEBI:18420"/>
        <label>1</label>
    </ligand>
</feature>
<feature type="binding site" evidence="1">
    <location>
        <position position="39"/>
    </location>
    <ligand>
        <name>Mg(2+)</name>
        <dbReference type="ChEBI" id="CHEBI:18420"/>
        <label>2</label>
    </ligand>
</feature>
<feature type="binding site" evidence="1">
    <location>
        <position position="43"/>
    </location>
    <ligand>
        <name>D-ribulose 5-phosphate</name>
        <dbReference type="ChEBI" id="CHEBI:58121"/>
    </ligand>
</feature>
<feature type="binding site" evidence="1">
    <location>
        <begin position="179"/>
        <end position="183"/>
    </location>
    <ligand>
        <name>D-ribulose 5-phosphate</name>
        <dbReference type="ChEBI" id="CHEBI:58121"/>
    </ligand>
</feature>
<feature type="binding site" evidence="1">
    <location>
        <position position="203"/>
    </location>
    <ligand>
        <name>D-ribulose 5-phosphate</name>
        <dbReference type="ChEBI" id="CHEBI:58121"/>
    </ligand>
</feature>
<feature type="site" description="Essential for catalytic activity" evidence="1">
    <location>
        <position position="165"/>
    </location>
</feature>
<feature type="site" description="Essential for catalytic activity" evidence="1">
    <location>
        <position position="203"/>
    </location>
</feature>
<evidence type="ECO:0000255" key="1">
    <source>
        <dbReference type="HAMAP-Rule" id="MF_00180"/>
    </source>
</evidence>
<name>RIBB_METMA</name>
<sequence length="247" mass="27268">MSENMAYECLKYSNENINRALEALRAGKMIQIYDSDSREGETDLVIPAKAVTYTDVKWMRKDAGGLICVAVDPVASKQLKLPFMADLVREASKTSDSLGEVVEKDGDLKYDAHSSFSLWVNHRDTRTGIPDIERALTIRKIGEITEESLSGNGVRFGNEFRTPGHVALLRAAEGLLDERMGQTELSVALARMAGITPAMVVCEMLDDDSGKALSKEKSKEYGKEHGLVFLEGREIVEAYLLWAGTDC</sequence>
<protein>
    <recommendedName>
        <fullName evidence="1">3,4-dihydroxy-2-butanone 4-phosphate synthase</fullName>
        <shortName evidence="1">DHBP synthase</shortName>
        <ecNumber evidence="1">4.1.99.12</ecNumber>
    </recommendedName>
</protein>
<organism>
    <name type="scientific">Methanosarcina mazei (strain ATCC BAA-159 / DSM 3647 / Goe1 / Go1 / JCM 11833 / OCM 88)</name>
    <name type="common">Methanosarcina frisia</name>
    <dbReference type="NCBI Taxonomy" id="192952"/>
    <lineage>
        <taxon>Archaea</taxon>
        <taxon>Methanobacteriati</taxon>
        <taxon>Methanobacteriota</taxon>
        <taxon>Stenosarchaea group</taxon>
        <taxon>Methanomicrobia</taxon>
        <taxon>Methanosarcinales</taxon>
        <taxon>Methanosarcinaceae</taxon>
        <taxon>Methanosarcina</taxon>
    </lineage>
</organism>
<dbReference type="EC" id="4.1.99.12" evidence="1"/>
<dbReference type="EMBL" id="AE008384">
    <property type="protein sequence ID" value="AAM31406.1"/>
    <property type="molecule type" value="Genomic_DNA"/>
</dbReference>
<dbReference type="RefSeq" id="WP_011033652.1">
    <property type="nucleotide sequence ID" value="NC_003901.1"/>
</dbReference>
<dbReference type="SMR" id="Q8PW86"/>
<dbReference type="GeneID" id="82160770"/>
<dbReference type="KEGG" id="mma:MM_1710"/>
<dbReference type="PATRIC" id="fig|192952.21.peg.1984"/>
<dbReference type="eggNOG" id="arCOG01320">
    <property type="taxonomic scope" value="Archaea"/>
</dbReference>
<dbReference type="HOGENOM" id="CLU_020273_3_2_2"/>
<dbReference type="UniPathway" id="UPA00275">
    <property type="reaction ID" value="UER00399"/>
</dbReference>
<dbReference type="Proteomes" id="UP000000595">
    <property type="component" value="Chromosome"/>
</dbReference>
<dbReference type="GO" id="GO:0005829">
    <property type="term" value="C:cytosol"/>
    <property type="evidence" value="ECO:0007669"/>
    <property type="project" value="TreeGrafter"/>
</dbReference>
<dbReference type="GO" id="GO:0008686">
    <property type="term" value="F:3,4-dihydroxy-2-butanone-4-phosphate synthase activity"/>
    <property type="evidence" value="ECO:0007669"/>
    <property type="project" value="UniProtKB-UniRule"/>
</dbReference>
<dbReference type="GO" id="GO:0000287">
    <property type="term" value="F:magnesium ion binding"/>
    <property type="evidence" value="ECO:0007669"/>
    <property type="project" value="UniProtKB-UniRule"/>
</dbReference>
<dbReference type="GO" id="GO:0030145">
    <property type="term" value="F:manganese ion binding"/>
    <property type="evidence" value="ECO:0007669"/>
    <property type="project" value="UniProtKB-UniRule"/>
</dbReference>
<dbReference type="GO" id="GO:0009231">
    <property type="term" value="P:riboflavin biosynthetic process"/>
    <property type="evidence" value="ECO:0007669"/>
    <property type="project" value="UniProtKB-UniRule"/>
</dbReference>
<dbReference type="FunFam" id="3.90.870.10:FF:000012">
    <property type="entry name" value="3,4-dihydroxy-2-butanone 4-phosphate synthase"/>
    <property type="match status" value="1"/>
</dbReference>
<dbReference type="Gene3D" id="3.90.870.10">
    <property type="entry name" value="DHBP synthase"/>
    <property type="match status" value="1"/>
</dbReference>
<dbReference type="HAMAP" id="MF_00180">
    <property type="entry name" value="RibB"/>
    <property type="match status" value="1"/>
</dbReference>
<dbReference type="InterPro" id="IPR017945">
    <property type="entry name" value="DHBP_synth_RibB-like_a/b_dom"/>
</dbReference>
<dbReference type="InterPro" id="IPR000422">
    <property type="entry name" value="DHBP_synthase_RibB"/>
</dbReference>
<dbReference type="NCBIfam" id="TIGR00506">
    <property type="entry name" value="ribB"/>
    <property type="match status" value="1"/>
</dbReference>
<dbReference type="PANTHER" id="PTHR21327:SF46">
    <property type="entry name" value="3,4-DIHYDROXY-2-BUTANONE 4-PHOSPHATE SYNTHASE"/>
    <property type="match status" value="1"/>
</dbReference>
<dbReference type="PANTHER" id="PTHR21327">
    <property type="entry name" value="GTP CYCLOHYDROLASE II-RELATED"/>
    <property type="match status" value="1"/>
</dbReference>
<dbReference type="Pfam" id="PF00926">
    <property type="entry name" value="DHBP_synthase"/>
    <property type="match status" value="1"/>
</dbReference>
<dbReference type="SUPFAM" id="SSF55821">
    <property type="entry name" value="YrdC/RibB"/>
    <property type="match status" value="1"/>
</dbReference>
<reference key="1">
    <citation type="journal article" date="2002" name="J. Mol. Microbiol. Biotechnol.">
        <title>The genome of Methanosarcina mazei: evidence for lateral gene transfer between Bacteria and Archaea.</title>
        <authorList>
            <person name="Deppenmeier U."/>
            <person name="Johann A."/>
            <person name="Hartsch T."/>
            <person name="Merkl R."/>
            <person name="Schmitz R.A."/>
            <person name="Martinez-Arias R."/>
            <person name="Henne A."/>
            <person name="Wiezer A."/>
            <person name="Baeumer S."/>
            <person name="Jacobi C."/>
            <person name="Brueggemann H."/>
            <person name="Lienard T."/>
            <person name="Christmann A."/>
            <person name="Boemecke M."/>
            <person name="Steckel S."/>
            <person name="Bhattacharyya A."/>
            <person name="Lykidis A."/>
            <person name="Overbeek R."/>
            <person name="Klenk H.-P."/>
            <person name="Gunsalus R.P."/>
            <person name="Fritz H.-J."/>
            <person name="Gottschalk G."/>
        </authorList>
    </citation>
    <scope>NUCLEOTIDE SEQUENCE [LARGE SCALE GENOMIC DNA]</scope>
    <source>
        <strain>ATCC BAA-159 / DSM 3647 / Goe1 / Go1 / JCM 11833 / OCM 88</strain>
    </source>
</reference>
<keyword id="KW-0456">Lyase</keyword>
<keyword id="KW-0460">Magnesium</keyword>
<keyword id="KW-0464">Manganese</keyword>
<keyword id="KW-0479">Metal-binding</keyword>
<keyword id="KW-0686">Riboflavin biosynthesis</keyword>
<proteinExistence type="inferred from homology"/>
<comment type="function">
    <text evidence="1">Catalyzes the conversion of D-ribulose 5-phosphate to formate and 3,4-dihydroxy-2-butanone 4-phosphate.</text>
</comment>
<comment type="catalytic activity">
    <reaction evidence="1">
        <text>D-ribulose 5-phosphate = (2S)-2-hydroxy-3-oxobutyl phosphate + formate + H(+)</text>
        <dbReference type="Rhea" id="RHEA:18457"/>
        <dbReference type="ChEBI" id="CHEBI:15378"/>
        <dbReference type="ChEBI" id="CHEBI:15740"/>
        <dbReference type="ChEBI" id="CHEBI:58121"/>
        <dbReference type="ChEBI" id="CHEBI:58830"/>
        <dbReference type="EC" id="4.1.99.12"/>
    </reaction>
</comment>
<comment type="cofactor">
    <cofactor evidence="1">
        <name>Mg(2+)</name>
        <dbReference type="ChEBI" id="CHEBI:18420"/>
    </cofactor>
    <cofactor evidence="1">
        <name>Mn(2+)</name>
        <dbReference type="ChEBI" id="CHEBI:29035"/>
    </cofactor>
    <text evidence="1">Binds 2 divalent metal cations per subunit. Magnesium or manganese.</text>
</comment>
<comment type="pathway">
    <text evidence="1">Cofactor biosynthesis; riboflavin biosynthesis; 2-hydroxy-3-oxobutyl phosphate from D-ribulose 5-phosphate: step 1/1.</text>
</comment>
<comment type="subunit">
    <text evidence="1">Homodimer.</text>
</comment>
<comment type="similarity">
    <text evidence="1">Belongs to the DHBP synthase family.</text>
</comment>
<gene>
    <name evidence="1" type="primary">ribB</name>
    <name type="ordered locus">MM_1710</name>
</gene>
<accession>Q8PW86</accession>